<keyword id="KW-0963">Cytoplasm</keyword>
<keyword id="KW-0378">Hydrolase</keyword>
<keyword id="KW-0546">Nucleotide metabolism</keyword>
<keyword id="KW-1185">Reference proteome</keyword>
<feature type="chain" id="PRO_0000267240" description="dTTP/UTP pyrophosphatase">
    <location>
        <begin position="1"/>
        <end position="202"/>
    </location>
</feature>
<feature type="active site" description="Proton acceptor" evidence="1">
    <location>
        <position position="80"/>
    </location>
</feature>
<feature type="site" description="Important for substrate specificity" evidence="1">
    <location>
        <position position="17"/>
    </location>
</feature>
<feature type="site" description="Important for substrate specificity" evidence="1">
    <location>
        <position position="81"/>
    </location>
</feature>
<feature type="site" description="Important for substrate specificity" evidence="1">
    <location>
        <position position="162"/>
    </location>
</feature>
<proteinExistence type="inferred from homology"/>
<organism>
    <name type="scientific">Alkalilimnicola ehrlichii (strain ATCC BAA-1101 / DSM 17681 / MLHE-1)</name>
    <dbReference type="NCBI Taxonomy" id="187272"/>
    <lineage>
        <taxon>Bacteria</taxon>
        <taxon>Pseudomonadati</taxon>
        <taxon>Pseudomonadota</taxon>
        <taxon>Gammaproteobacteria</taxon>
        <taxon>Chromatiales</taxon>
        <taxon>Ectothiorhodospiraceae</taxon>
        <taxon>Alkalilimnicola</taxon>
    </lineage>
</organism>
<sequence>MQPEYRPHIYLASNSPRRRELLDRIGVHYAWMDPGVDEVLGEDESPEVFVLRIALEKARAGYRSLQEDPERELLPVMGADTVVVLDNELLGKPRGREHGLEMLQSLSGTTHRVLTGVALVDDREATRLSVSHVTFRELERAEIERYWATGEPQDKAGGYAIQGRAAVFVEHLEGSYSGVMGLPLFEAAQLLDEFEIDYQRHW</sequence>
<accession>Q0ABM5</accession>
<evidence type="ECO:0000255" key="1">
    <source>
        <dbReference type="HAMAP-Rule" id="MF_00528"/>
    </source>
</evidence>
<reference key="1">
    <citation type="submission" date="2006-08" db="EMBL/GenBank/DDBJ databases">
        <title>Complete sequence of Alkalilimnicola ehrilichei MLHE-1.</title>
        <authorList>
            <person name="Copeland A."/>
            <person name="Lucas S."/>
            <person name="Lapidus A."/>
            <person name="Barry K."/>
            <person name="Detter J.C."/>
            <person name="Glavina del Rio T."/>
            <person name="Hammon N."/>
            <person name="Israni S."/>
            <person name="Dalin E."/>
            <person name="Tice H."/>
            <person name="Pitluck S."/>
            <person name="Sims D."/>
            <person name="Brettin T."/>
            <person name="Bruce D."/>
            <person name="Han C."/>
            <person name="Tapia R."/>
            <person name="Gilna P."/>
            <person name="Schmutz J."/>
            <person name="Larimer F."/>
            <person name="Land M."/>
            <person name="Hauser L."/>
            <person name="Kyrpides N."/>
            <person name="Mikhailova N."/>
            <person name="Oremland R.S."/>
            <person name="Hoeft S.E."/>
            <person name="Switzer-Blum J."/>
            <person name="Kulp T."/>
            <person name="King G."/>
            <person name="Tabita R."/>
            <person name="Witte B."/>
            <person name="Santini J.M."/>
            <person name="Basu P."/>
            <person name="Hollibaugh J.T."/>
            <person name="Xie G."/>
            <person name="Stolz J.F."/>
            <person name="Richardson P."/>
        </authorList>
    </citation>
    <scope>NUCLEOTIDE SEQUENCE [LARGE SCALE GENOMIC DNA]</scope>
    <source>
        <strain>ATCC BAA-1101 / DSM 17681 / MLHE-1</strain>
    </source>
</reference>
<name>NTPPA_ALKEH</name>
<protein>
    <recommendedName>
        <fullName evidence="1">dTTP/UTP pyrophosphatase</fullName>
        <shortName evidence="1">dTTPase/UTPase</shortName>
        <ecNumber evidence="1">3.6.1.9</ecNumber>
    </recommendedName>
    <alternativeName>
        <fullName evidence="1">Nucleoside triphosphate pyrophosphatase</fullName>
    </alternativeName>
    <alternativeName>
        <fullName evidence="1">Nucleotide pyrophosphatase</fullName>
        <shortName evidence="1">Nucleotide PPase</shortName>
    </alternativeName>
</protein>
<gene>
    <name type="ordered locus">Mlg_0408</name>
</gene>
<dbReference type="EC" id="3.6.1.9" evidence="1"/>
<dbReference type="EMBL" id="CP000453">
    <property type="protein sequence ID" value="ABI55762.1"/>
    <property type="molecule type" value="Genomic_DNA"/>
</dbReference>
<dbReference type="RefSeq" id="WP_011628158.1">
    <property type="nucleotide sequence ID" value="NC_008340.1"/>
</dbReference>
<dbReference type="SMR" id="Q0ABM5"/>
<dbReference type="KEGG" id="aeh:Mlg_0408"/>
<dbReference type="eggNOG" id="COG0424">
    <property type="taxonomic scope" value="Bacteria"/>
</dbReference>
<dbReference type="HOGENOM" id="CLU_040416_2_1_6"/>
<dbReference type="OrthoDB" id="9807767at2"/>
<dbReference type="Proteomes" id="UP000001962">
    <property type="component" value="Chromosome"/>
</dbReference>
<dbReference type="GO" id="GO:0005737">
    <property type="term" value="C:cytoplasm"/>
    <property type="evidence" value="ECO:0007669"/>
    <property type="project" value="UniProtKB-SubCell"/>
</dbReference>
<dbReference type="GO" id="GO:0036218">
    <property type="term" value="F:dTTP diphosphatase activity"/>
    <property type="evidence" value="ECO:0007669"/>
    <property type="project" value="RHEA"/>
</dbReference>
<dbReference type="GO" id="GO:0036221">
    <property type="term" value="F:UTP diphosphatase activity"/>
    <property type="evidence" value="ECO:0007669"/>
    <property type="project" value="RHEA"/>
</dbReference>
<dbReference type="GO" id="GO:0009117">
    <property type="term" value="P:nucleotide metabolic process"/>
    <property type="evidence" value="ECO:0007669"/>
    <property type="project" value="UniProtKB-KW"/>
</dbReference>
<dbReference type="CDD" id="cd00555">
    <property type="entry name" value="Maf"/>
    <property type="match status" value="1"/>
</dbReference>
<dbReference type="Gene3D" id="3.90.950.10">
    <property type="match status" value="1"/>
</dbReference>
<dbReference type="HAMAP" id="MF_00528">
    <property type="entry name" value="Maf"/>
    <property type="match status" value="1"/>
</dbReference>
<dbReference type="InterPro" id="IPR029001">
    <property type="entry name" value="ITPase-like_fam"/>
</dbReference>
<dbReference type="InterPro" id="IPR003697">
    <property type="entry name" value="Maf-like"/>
</dbReference>
<dbReference type="NCBIfam" id="TIGR00172">
    <property type="entry name" value="maf"/>
    <property type="match status" value="1"/>
</dbReference>
<dbReference type="PANTHER" id="PTHR43213">
    <property type="entry name" value="BIFUNCTIONAL DTTP/UTP PYROPHOSPHATASE/METHYLTRANSFERASE PROTEIN-RELATED"/>
    <property type="match status" value="1"/>
</dbReference>
<dbReference type="PANTHER" id="PTHR43213:SF5">
    <property type="entry name" value="BIFUNCTIONAL DTTP_UTP PYROPHOSPHATASE_METHYLTRANSFERASE PROTEIN-RELATED"/>
    <property type="match status" value="1"/>
</dbReference>
<dbReference type="Pfam" id="PF02545">
    <property type="entry name" value="Maf"/>
    <property type="match status" value="1"/>
</dbReference>
<dbReference type="PIRSF" id="PIRSF006305">
    <property type="entry name" value="Maf"/>
    <property type="match status" value="1"/>
</dbReference>
<dbReference type="SUPFAM" id="SSF52972">
    <property type="entry name" value="ITPase-like"/>
    <property type="match status" value="1"/>
</dbReference>
<comment type="function">
    <text evidence="1">Nucleoside triphosphate pyrophosphatase that hydrolyzes dTTP and UTP. May have a dual role in cell division arrest and in preventing the incorporation of modified nucleotides into cellular nucleic acids.</text>
</comment>
<comment type="catalytic activity">
    <reaction evidence="1">
        <text>dTTP + H2O = dTMP + diphosphate + H(+)</text>
        <dbReference type="Rhea" id="RHEA:28534"/>
        <dbReference type="ChEBI" id="CHEBI:15377"/>
        <dbReference type="ChEBI" id="CHEBI:15378"/>
        <dbReference type="ChEBI" id="CHEBI:33019"/>
        <dbReference type="ChEBI" id="CHEBI:37568"/>
        <dbReference type="ChEBI" id="CHEBI:63528"/>
        <dbReference type="EC" id="3.6.1.9"/>
    </reaction>
</comment>
<comment type="catalytic activity">
    <reaction evidence="1">
        <text>UTP + H2O = UMP + diphosphate + H(+)</text>
        <dbReference type="Rhea" id="RHEA:29395"/>
        <dbReference type="ChEBI" id="CHEBI:15377"/>
        <dbReference type="ChEBI" id="CHEBI:15378"/>
        <dbReference type="ChEBI" id="CHEBI:33019"/>
        <dbReference type="ChEBI" id="CHEBI:46398"/>
        <dbReference type="ChEBI" id="CHEBI:57865"/>
        <dbReference type="EC" id="3.6.1.9"/>
    </reaction>
</comment>
<comment type="cofactor">
    <cofactor evidence="1">
        <name>a divalent metal cation</name>
        <dbReference type="ChEBI" id="CHEBI:60240"/>
    </cofactor>
</comment>
<comment type="subcellular location">
    <subcellularLocation>
        <location evidence="1">Cytoplasm</location>
    </subcellularLocation>
</comment>
<comment type="similarity">
    <text evidence="1">Belongs to the Maf family. YhdE subfamily.</text>
</comment>